<feature type="chain" id="PRO_0000303556" description="tRNA N6-adenosine threonylcarbamoyltransferase">
    <location>
        <begin position="1"/>
        <end position="342"/>
    </location>
</feature>
<feature type="binding site" evidence="1">
    <location>
        <position position="115"/>
    </location>
    <ligand>
        <name>Fe cation</name>
        <dbReference type="ChEBI" id="CHEBI:24875"/>
    </ligand>
</feature>
<feature type="binding site" evidence="1">
    <location>
        <position position="119"/>
    </location>
    <ligand>
        <name>Fe cation</name>
        <dbReference type="ChEBI" id="CHEBI:24875"/>
    </ligand>
</feature>
<feature type="binding site" evidence="1">
    <location>
        <begin position="137"/>
        <end position="141"/>
    </location>
    <ligand>
        <name>substrate</name>
    </ligand>
</feature>
<feature type="binding site" evidence="1">
    <location>
        <position position="170"/>
    </location>
    <ligand>
        <name>substrate</name>
    </ligand>
</feature>
<feature type="binding site" evidence="1">
    <location>
        <position position="183"/>
    </location>
    <ligand>
        <name>substrate</name>
    </ligand>
</feature>
<feature type="binding site" evidence="1">
    <location>
        <position position="187"/>
    </location>
    <ligand>
        <name>substrate</name>
    </ligand>
</feature>
<feature type="binding site" evidence="1">
    <location>
        <position position="276"/>
    </location>
    <ligand>
        <name>substrate</name>
    </ligand>
</feature>
<feature type="binding site" evidence="1">
    <location>
        <position position="304"/>
    </location>
    <ligand>
        <name>Fe cation</name>
        <dbReference type="ChEBI" id="CHEBI:24875"/>
    </ligand>
</feature>
<dbReference type="EC" id="2.3.1.234" evidence="1"/>
<dbReference type="EMBL" id="AP008934">
    <property type="protein sequence ID" value="BAE17974.1"/>
    <property type="molecule type" value="Genomic_DNA"/>
</dbReference>
<dbReference type="RefSeq" id="WP_011302719.1">
    <property type="nucleotide sequence ID" value="NZ_MTGA01000028.1"/>
</dbReference>
<dbReference type="SMR" id="Q49Z04"/>
<dbReference type="GeneID" id="3617351"/>
<dbReference type="KEGG" id="ssp:SSP0829"/>
<dbReference type="PATRIC" id="fig|342451.11.peg.831"/>
<dbReference type="eggNOG" id="COG0533">
    <property type="taxonomic scope" value="Bacteria"/>
</dbReference>
<dbReference type="HOGENOM" id="CLU_023208_0_2_9"/>
<dbReference type="OrthoDB" id="9806197at2"/>
<dbReference type="Proteomes" id="UP000006371">
    <property type="component" value="Chromosome"/>
</dbReference>
<dbReference type="GO" id="GO:0005737">
    <property type="term" value="C:cytoplasm"/>
    <property type="evidence" value="ECO:0007669"/>
    <property type="project" value="UniProtKB-SubCell"/>
</dbReference>
<dbReference type="GO" id="GO:0005506">
    <property type="term" value="F:iron ion binding"/>
    <property type="evidence" value="ECO:0007669"/>
    <property type="project" value="UniProtKB-UniRule"/>
</dbReference>
<dbReference type="GO" id="GO:0061711">
    <property type="term" value="F:N(6)-L-threonylcarbamoyladenine synthase activity"/>
    <property type="evidence" value="ECO:0007669"/>
    <property type="project" value="UniProtKB-EC"/>
</dbReference>
<dbReference type="GO" id="GO:0002949">
    <property type="term" value="P:tRNA threonylcarbamoyladenosine modification"/>
    <property type="evidence" value="ECO:0007669"/>
    <property type="project" value="UniProtKB-UniRule"/>
</dbReference>
<dbReference type="CDD" id="cd24133">
    <property type="entry name" value="ASKHA_NBD_TsaD_bac"/>
    <property type="match status" value="1"/>
</dbReference>
<dbReference type="FunFam" id="3.30.420.40:FF:000012">
    <property type="entry name" value="tRNA N6-adenosine threonylcarbamoyltransferase"/>
    <property type="match status" value="1"/>
</dbReference>
<dbReference type="FunFam" id="3.30.420.40:FF:000040">
    <property type="entry name" value="tRNA N6-adenosine threonylcarbamoyltransferase"/>
    <property type="match status" value="1"/>
</dbReference>
<dbReference type="Gene3D" id="3.30.420.40">
    <property type="match status" value="2"/>
</dbReference>
<dbReference type="HAMAP" id="MF_01445">
    <property type="entry name" value="TsaD"/>
    <property type="match status" value="1"/>
</dbReference>
<dbReference type="InterPro" id="IPR043129">
    <property type="entry name" value="ATPase_NBD"/>
</dbReference>
<dbReference type="InterPro" id="IPR000905">
    <property type="entry name" value="Gcp-like_dom"/>
</dbReference>
<dbReference type="InterPro" id="IPR017861">
    <property type="entry name" value="KAE1/TsaD"/>
</dbReference>
<dbReference type="InterPro" id="IPR017860">
    <property type="entry name" value="Peptidase_M22_CS"/>
</dbReference>
<dbReference type="InterPro" id="IPR022450">
    <property type="entry name" value="TsaD"/>
</dbReference>
<dbReference type="NCBIfam" id="TIGR00329">
    <property type="entry name" value="gcp_kae1"/>
    <property type="match status" value="1"/>
</dbReference>
<dbReference type="NCBIfam" id="TIGR03723">
    <property type="entry name" value="T6A_TsaD_YgjD"/>
    <property type="match status" value="1"/>
</dbReference>
<dbReference type="PANTHER" id="PTHR11735">
    <property type="entry name" value="TRNA N6-ADENOSINE THREONYLCARBAMOYLTRANSFERASE"/>
    <property type="match status" value="1"/>
</dbReference>
<dbReference type="PANTHER" id="PTHR11735:SF6">
    <property type="entry name" value="TRNA N6-ADENOSINE THREONYLCARBAMOYLTRANSFERASE, MITOCHONDRIAL"/>
    <property type="match status" value="1"/>
</dbReference>
<dbReference type="Pfam" id="PF00814">
    <property type="entry name" value="TsaD"/>
    <property type="match status" value="1"/>
</dbReference>
<dbReference type="PRINTS" id="PR00789">
    <property type="entry name" value="OSIALOPTASE"/>
</dbReference>
<dbReference type="SUPFAM" id="SSF53067">
    <property type="entry name" value="Actin-like ATPase domain"/>
    <property type="match status" value="2"/>
</dbReference>
<dbReference type="PROSITE" id="PS01016">
    <property type="entry name" value="GLYCOPROTEASE"/>
    <property type="match status" value="1"/>
</dbReference>
<protein>
    <recommendedName>
        <fullName evidence="1">tRNA N6-adenosine threonylcarbamoyltransferase</fullName>
        <ecNumber evidence="1">2.3.1.234</ecNumber>
    </recommendedName>
    <alternativeName>
        <fullName evidence="1">N6-L-threonylcarbamoyladenine synthase</fullName>
        <shortName evidence="1">t(6)A synthase</shortName>
    </alternativeName>
    <alternativeName>
        <fullName evidence="1">t(6)A37 threonylcarbamoyladenosine biosynthesis protein TsaD</fullName>
    </alternativeName>
    <alternativeName>
        <fullName evidence="1">tRNA threonylcarbamoyladenosine biosynthesis protein TsaD</fullName>
    </alternativeName>
</protein>
<keyword id="KW-0012">Acyltransferase</keyword>
<keyword id="KW-0963">Cytoplasm</keyword>
<keyword id="KW-0408">Iron</keyword>
<keyword id="KW-0479">Metal-binding</keyword>
<keyword id="KW-1185">Reference proteome</keyword>
<keyword id="KW-0808">Transferase</keyword>
<keyword id="KW-0819">tRNA processing</keyword>
<evidence type="ECO:0000255" key="1">
    <source>
        <dbReference type="HAMAP-Rule" id="MF_01445"/>
    </source>
</evidence>
<name>TSAD_STAS1</name>
<comment type="function">
    <text evidence="1">Required for the formation of a threonylcarbamoyl group on adenosine at position 37 (t(6)A37) in tRNAs that read codons beginning with adenine. Is involved in the transfer of the threonylcarbamoyl moiety of threonylcarbamoyl-AMP (TC-AMP) to the N6 group of A37, together with TsaE and TsaB. TsaD likely plays a direct catalytic role in this reaction.</text>
</comment>
<comment type="catalytic activity">
    <reaction evidence="1">
        <text>L-threonylcarbamoyladenylate + adenosine(37) in tRNA = N(6)-L-threonylcarbamoyladenosine(37) in tRNA + AMP + H(+)</text>
        <dbReference type="Rhea" id="RHEA:37059"/>
        <dbReference type="Rhea" id="RHEA-COMP:10162"/>
        <dbReference type="Rhea" id="RHEA-COMP:10163"/>
        <dbReference type="ChEBI" id="CHEBI:15378"/>
        <dbReference type="ChEBI" id="CHEBI:73682"/>
        <dbReference type="ChEBI" id="CHEBI:74411"/>
        <dbReference type="ChEBI" id="CHEBI:74418"/>
        <dbReference type="ChEBI" id="CHEBI:456215"/>
        <dbReference type="EC" id="2.3.1.234"/>
    </reaction>
</comment>
<comment type="cofactor">
    <cofactor evidence="1">
        <name>Fe(2+)</name>
        <dbReference type="ChEBI" id="CHEBI:29033"/>
    </cofactor>
    <text evidence="1">Binds 1 Fe(2+) ion per subunit.</text>
</comment>
<comment type="subcellular location">
    <subcellularLocation>
        <location evidence="1">Cytoplasm</location>
    </subcellularLocation>
</comment>
<comment type="similarity">
    <text evidence="1">Belongs to the KAE1 / TsaD family.</text>
</comment>
<gene>
    <name evidence="1" type="primary">tsaD</name>
    <name type="synonym">gcp</name>
    <name type="ordered locus">SSP0829</name>
</gene>
<reference key="1">
    <citation type="journal article" date="2005" name="Proc. Natl. Acad. Sci. U.S.A.">
        <title>Whole genome sequence of Staphylococcus saprophyticus reveals the pathogenesis of uncomplicated urinary tract infection.</title>
        <authorList>
            <person name="Kuroda M."/>
            <person name="Yamashita A."/>
            <person name="Hirakawa H."/>
            <person name="Kumano M."/>
            <person name="Morikawa K."/>
            <person name="Higashide M."/>
            <person name="Maruyama A."/>
            <person name="Inose Y."/>
            <person name="Matoba K."/>
            <person name="Toh H."/>
            <person name="Kuhara S."/>
            <person name="Hattori M."/>
            <person name="Ohta T."/>
        </authorList>
    </citation>
    <scope>NUCLEOTIDE SEQUENCE [LARGE SCALE GENOMIC DNA]</scope>
    <source>
        <strain>ATCC 15305 / DSM 20229 / NCIMB 8711 / NCTC 7292 / S-41</strain>
    </source>
</reference>
<organism>
    <name type="scientific">Staphylococcus saprophyticus subsp. saprophyticus (strain ATCC 15305 / DSM 20229 / NCIMB 8711 / NCTC 7292 / S-41)</name>
    <dbReference type="NCBI Taxonomy" id="342451"/>
    <lineage>
        <taxon>Bacteria</taxon>
        <taxon>Bacillati</taxon>
        <taxon>Bacillota</taxon>
        <taxon>Bacilli</taxon>
        <taxon>Bacillales</taxon>
        <taxon>Staphylococcaceae</taxon>
        <taxon>Staphylococcus</taxon>
    </lineage>
</organism>
<sequence length="342" mass="36490">MSETTLILAIESSCDETSVSIIENGKNILSNIVLSQIESHKRFGGVVPEVASRHHVEGITTTIDEALNSANTTMNDIDAVAVTQGPGLIGALLVGINAAKALAFAYDKPLIPVHHIAGHVYANHLEKPLQFPLIALIVSGGHTELVYMKNHLSFEVIGETRDDAVGEAYDKVARTIGLSYPGGPQVDNLAAHGEDSYDFPRVWLDKNSYDFSFSGLKSAVINKLHNLRQKGEAINEANVATSFQNSVVEVLVGKTIAACKNYNVNQLIVAGGVASNKGLRAHLSSACESNDINLSIPSPKLCTDNAAMIGAAGYYLFKAGVTADMALNGYNHMDIEQCSIES</sequence>
<accession>Q49Z04</accession>
<proteinExistence type="inferred from homology"/>